<comment type="function">
    <text evidence="1">One of the primary rRNA binding proteins, this protein initially binds near the 5'-end of the 23S rRNA. It is important during the early stages of 50S assembly. It makes multiple contacts with different domains of the 23S rRNA in the assembled 50S subunit and ribosome.</text>
</comment>
<comment type="function">
    <text evidence="1">Forms part of the polypeptide exit tunnel.</text>
</comment>
<comment type="subunit">
    <text evidence="1">Part of the 50S ribosomal subunit.</text>
</comment>
<comment type="similarity">
    <text evidence="1">Belongs to the universal ribosomal protein uL4 family.</text>
</comment>
<evidence type="ECO:0000255" key="1">
    <source>
        <dbReference type="HAMAP-Rule" id="MF_01328"/>
    </source>
</evidence>
<evidence type="ECO:0000256" key="2">
    <source>
        <dbReference type="SAM" id="MobiDB-lite"/>
    </source>
</evidence>
<evidence type="ECO:0000305" key="3"/>
<feature type="chain" id="PRO_0000129241" description="Large ribosomal subunit protein uL4">
    <location>
        <begin position="1"/>
        <end position="208"/>
    </location>
</feature>
<feature type="region of interest" description="Disordered" evidence="2">
    <location>
        <begin position="50"/>
        <end position="83"/>
    </location>
</feature>
<keyword id="KW-1185">Reference proteome</keyword>
<keyword id="KW-0687">Ribonucleoprotein</keyword>
<keyword id="KW-0689">Ribosomal protein</keyword>
<keyword id="KW-0694">RNA-binding</keyword>
<keyword id="KW-0699">rRNA-binding</keyword>
<dbReference type="EMBL" id="BX293980">
    <property type="protein sequence ID" value="CAE77362.1"/>
    <property type="molecule type" value="Genomic_DNA"/>
</dbReference>
<dbReference type="RefSeq" id="NP_975720.1">
    <property type="nucleotide sequence ID" value="NC_005364.2"/>
</dbReference>
<dbReference type="RefSeq" id="WP_011166912.1">
    <property type="nucleotide sequence ID" value="NC_005364.2"/>
</dbReference>
<dbReference type="SMR" id="P61065"/>
<dbReference type="STRING" id="272632.MSC_0744"/>
<dbReference type="KEGG" id="mmy:MSC_0744"/>
<dbReference type="PATRIC" id="fig|272632.4.peg.801"/>
<dbReference type="eggNOG" id="COG0088">
    <property type="taxonomic scope" value="Bacteria"/>
</dbReference>
<dbReference type="HOGENOM" id="CLU_041575_5_2_14"/>
<dbReference type="Proteomes" id="UP000001016">
    <property type="component" value="Chromosome"/>
</dbReference>
<dbReference type="GO" id="GO:1990904">
    <property type="term" value="C:ribonucleoprotein complex"/>
    <property type="evidence" value="ECO:0007669"/>
    <property type="project" value="UniProtKB-KW"/>
</dbReference>
<dbReference type="GO" id="GO:0005840">
    <property type="term" value="C:ribosome"/>
    <property type="evidence" value="ECO:0007669"/>
    <property type="project" value="UniProtKB-KW"/>
</dbReference>
<dbReference type="GO" id="GO:0019843">
    <property type="term" value="F:rRNA binding"/>
    <property type="evidence" value="ECO:0007669"/>
    <property type="project" value="UniProtKB-UniRule"/>
</dbReference>
<dbReference type="GO" id="GO:0003735">
    <property type="term" value="F:structural constituent of ribosome"/>
    <property type="evidence" value="ECO:0007669"/>
    <property type="project" value="InterPro"/>
</dbReference>
<dbReference type="GO" id="GO:0006412">
    <property type="term" value="P:translation"/>
    <property type="evidence" value="ECO:0007669"/>
    <property type="project" value="UniProtKB-UniRule"/>
</dbReference>
<dbReference type="Gene3D" id="3.40.1370.10">
    <property type="match status" value="1"/>
</dbReference>
<dbReference type="HAMAP" id="MF_01328_B">
    <property type="entry name" value="Ribosomal_uL4_B"/>
    <property type="match status" value="1"/>
</dbReference>
<dbReference type="InterPro" id="IPR002136">
    <property type="entry name" value="Ribosomal_uL4"/>
</dbReference>
<dbReference type="InterPro" id="IPR013005">
    <property type="entry name" value="Ribosomal_uL4-like"/>
</dbReference>
<dbReference type="InterPro" id="IPR023574">
    <property type="entry name" value="Ribosomal_uL4_dom_sf"/>
</dbReference>
<dbReference type="NCBIfam" id="TIGR03953">
    <property type="entry name" value="rplD_bact"/>
    <property type="match status" value="1"/>
</dbReference>
<dbReference type="PANTHER" id="PTHR10746">
    <property type="entry name" value="50S RIBOSOMAL PROTEIN L4"/>
    <property type="match status" value="1"/>
</dbReference>
<dbReference type="PANTHER" id="PTHR10746:SF6">
    <property type="entry name" value="LARGE RIBOSOMAL SUBUNIT PROTEIN UL4M"/>
    <property type="match status" value="1"/>
</dbReference>
<dbReference type="Pfam" id="PF00573">
    <property type="entry name" value="Ribosomal_L4"/>
    <property type="match status" value="1"/>
</dbReference>
<dbReference type="SUPFAM" id="SSF52166">
    <property type="entry name" value="Ribosomal protein L4"/>
    <property type="match status" value="1"/>
</dbReference>
<accession>P61065</accession>
<gene>
    <name evidence="1" type="primary">rplD</name>
    <name type="ordered locus">MSC_0744</name>
</gene>
<sequence length="208" mass="23106">MKLQVLDIKGNEIKEIALNDYVWGIEPHQQAIYDTVISQQAALRQGTKKVKTRAEVSGGGRKPWKQKGTGRARQGSIRAPQWKGGGVTFGPTPDINYKKSVNKKVRALAFRSVLSLKVKENNLVIVDKFEFAKPSTKEMVVVMKNLKIDDQKTLIVTKEKEELVVKSSNNITGVKTISANQLNVFDLLNATKLLITEEAAIAVEEVYA</sequence>
<proteinExistence type="inferred from homology"/>
<protein>
    <recommendedName>
        <fullName evidence="1">Large ribosomal subunit protein uL4</fullName>
    </recommendedName>
    <alternativeName>
        <fullName evidence="3">50S ribosomal protein L4</fullName>
    </alternativeName>
</protein>
<name>RL4_MYCMS</name>
<reference key="1">
    <citation type="journal article" date="2004" name="Genome Res.">
        <title>The genome sequence of Mycoplasma mycoides subsp. mycoides SC type strain PG1T, the causative agent of contagious bovine pleuropneumonia (CBPP).</title>
        <authorList>
            <person name="Westberg J."/>
            <person name="Persson A."/>
            <person name="Holmberg A."/>
            <person name="Goesmann A."/>
            <person name="Lundeberg J."/>
            <person name="Johansson K.-E."/>
            <person name="Pettersson B."/>
            <person name="Uhlen M."/>
        </authorList>
    </citation>
    <scope>NUCLEOTIDE SEQUENCE [LARGE SCALE GENOMIC DNA]</scope>
    <source>
        <strain>CCUG 32753 / NCTC 10114 / PG1</strain>
    </source>
</reference>
<organism>
    <name type="scientific">Mycoplasma mycoides subsp. mycoides SC (strain CCUG 32753 / NCTC 10114 / PG1)</name>
    <dbReference type="NCBI Taxonomy" id="272632"/>
    <lineage>
        <taxon>Bacteria</taxon>
        <taxon>Bacillati</taxon>
        <taxon>Mycoplasmatota</taxon>
        <taxon>Mollicutes</taxon>
        <taxon>Mycoplasmataceae</taxon>
        <taxon>Mycoplasma</taxon>
    </lineage>
</organism>